<feature type="chain" id="PRO_0000326517" description="Protein FAM50 homolog">
    <location>
        <begin position="1"/>
        <end position="358"/>
    </location>
</feature>
<feature type="region of interest" description="Disordered" evidence="1">
    <location>
        <begin position="104"/>
        <end position="151"/>
    </location>
</feature>
<feature type="compositionally biased region" description="Basic and acidic residues" evidence="1">
    <location>
        <begin position="104"/>
        <end position="113"/>
    </location>
</feature>
<feature type="compositionally biased region" description="Acidic residues" evidence="1">
    <location>
        <begin position="122"/>
        <end position="137"/>
    </location>
</feature>
<feature type="compositionally biased region" description="Basic and acidic residues" evidence="1">
    <location>
        <begin position="138"/>
        <end position="151"/>
    </location>
</feature>
<organism>
    <name type="scientific">Anopheles gambiae</name>
    <name type="common">African malaria mosquito</name>
    <dbReference type="NCBI Taxonomy" id="7165"/>
    <lineage>
        <taxon>Eukaryota</taxon>
        <taxon>Metazoa</taxon>
        <taxon>Ecdysozoa</taxon>
        <taxon>Arthropoda</taxon>
        <taxon>Hexapoda</taxon>
        <taxon>Insecta</taxon>
        <taxon>Pterygota</taxon>
        <taxon>Neoptera</taxon>
        <taxon>Endopterygota</taxon>
        <taxon>Diptera</taxon>
        <taxon>Nematocera</taxon>
        <taxon>Culicoidea</taxon>
        <taxon>Culicidae</taxon>
        <taxon>Anophelinae</taxon>
        <taxon>Anopheles</taxon>
    </lineage>
</organism>
<comment type="similarity">
    <text evidence="2">Belongs to the FAM50 family.</text>
</comment>
<sequence length="358" mass="41925">MAYYKGAASEGGRAAQLMKRRELAQQEVEFRKKKIEEDLKVSNIENKFAAHYDAVEQQLKSSTIGLVTLDEMKAKQEDIVREREKKLAQKKEEKDKEKLKALEAKLAEKDRQKRQIQALSFDPDDEPDGDDANDGDEGSGKESEKEDVKEELTVVKRSWKEQVPSGVKKIRKNPDVDTSFLPDREREERDNRLREELRQEWAMKQATLKDQEITITFSYWDGSGHRKSVAMKKGNSIYQFLQKCLEMLRKDFSELKTVMADQLMYVKEDLILPHHYTFYDFIVTKARGKSGPLFNFDVYDDIRMISDASVEKEDSHAGKVLLRSWYERNKHIFPASRWEPYDPTKVYDKYTIKDKSKK</sequence>
<proteinExistence type="inferred from homology"/>
<accession>Q7PYQ5</accession>
<gene>
    <name type="ORF">AGAP002062</name>
</gene>
<dbReference type="EMBL" id="AAAB01008987">
    <property type="protein sequence ID" value="EAA01068.2"/>
    <property type="molecule type" value="Genomic_DNA"/>
</dbReference>
<dbReference type="SMR" id="Q7PYQ5"/>
<dbReference type="FunCoup" id="Q7PYQ5">
    <property type="interactions" value="942"/>
</dbReference>
<dbReference type="STRING" id="7165.Q7PYQ5"/>
<dbReference type="PaxDb" id="7165-AGAP002062-PA"/>
<dbReference type="EnsemblMetazoa" id="AGAP002062-RA">
    <property type="protein sequence ID" value="AGAP002062-PA"/>
    <property type="gene ID" value="AGAP002062"/>
</dbReference>
<dbReference type="GeneID" id="1281051"/>
<dbReference type="KEGG" id="aga:1281051"/>
<dbReference type="VEuPathDB" id="VectorBase:AGAMI1_012195"/>
<dbReference type="VEuPathDB" id="VectorBase:AGAP002062"/>
<dbReference type="eggNOG" id="KOG2894">
    <property type="taxonomic scope" value="Eukaryota"/>
</dbReference>
<dbReference type="HOGENOM" id="CLU_037985_1_1_1"/>
<dbReference type="InParanoid" id="Q7PYQ5"/>
<dbReference type="OMA" id="DFIWVFL"/>
<dbReference type="OrthoDB" id="1562195at2759"/>
<dbReference type="PhylomeDB" id="Q7PYQ5"/>
<dbReference type="Proteomes" id="UP000007062">
    <property type="component" value="Chromosome 2R"/>
</dbReference>
<dbReference type="GO" id="GO:0005634">
    <property type="term" value="C:nucleus"/>
    <property type="evidence" value="ECO:0000318"/>
    <property type="project" value="GO_Central"/>
</dbReference>
<dbReference type="GO" id="GO:0006325">
    <property type="term" value="P:chromatin organization"/>
    <property type="evidence" value="ECO:0000318"/>
    <property type="project" value="GO_Central"/>
</dbReference>
<dbReference type="InterPro" id="IPR048337">
    <property type="entry name" value="FAM50A/XAP5_C"/>
</dbReference>
<dbReference type="InterPro" id="IPR007005">
    <property type="entry name" value="XAP5"/>
</dbReference>
<dbReference type="PANTHER" id="PTHR12722:SF0">
    <property type="entry name" value="PROTEIN FAM50A"/>
    <property type="match status" value="1"/>
</dbReference>
<dbReference type="PANTHER" id="PTHR12722">
    <property type="entry name" value="XAP-5 PROTEIN-RELATED"/>
    <property type="match status" value="1"/>
</dbReference>
<dbReference type="Pfam" id="PF04921">
    <property type="entry name" value="XAP5"/>
    <property type="match status" value="1"/>
</dbReference>
<evidence type="ECO:0000256" key="1">
    <source>
        <dbReference type="SAM" id="MobiDB-lite"/>
    </source>
</evidence>
<evidence type="ECO:0000305" key="2"/>
<name>FAM50_ANOGA</name>
<protein>
    <recommendedName>
        <fullName>Protein FAM50 homolog</fullName>
    </recommendedName>
</protein>
<keyword id="KW-1185">Reference proteome</keyword>
<reference key="1">
    <citation type="journal article" date="2002" name="Science">
        <title>The genome sequence of the malaria mosquito Anopheles gambiae.</title>
        <authorList>
            <person name="Holt R.A."/>
            <person name="Subramanian G.M."/>
            <person name="Halpern A."/>
            <person name="Sutton G.G."/>
            <person name="Charlab R."/>
            <person name="Nusskern D.R."/>
            <person name="Wincker P."/>
            <person name="Clark A.G."/>
            <person name="Ribeiro J.M.C."/>
            <person name="Wides R."/>
            <person name="Salzberg S.L."/>
            <person name="Loftus B.J."/>
            <person name="Yandell M.D."/>
            <person name="Majoros W.H."/>
            <person name="Rusch D.B."/>
            <person name="Lai Z."/>
            <person name="Kraft C.L."/>
            <person name="Abril J.F."/>
            <person name="Anthouard V."/>
            <person name="Arensburger P."/>
            <person name="Atkinson P.W."/>
            <person name="Baden H."/>
            <person name="de Berardinis V."/>
            <person name="Baldwin D."/>
            <person name="Benes V."/>
            <person name="Biedler J."/>
            <person name="Blass C."/>
            <person name="Bolanos R."/>
            <person name="Boscus D."/>
            <person name="Barnstead M."/>
            <person name="Cai S."/>
            <person name="Center A."/>
            <person name="Chaturverdi K."/>
            <person name="Christophides G.K."/>
            <person name="Chrystal M.A.M."/>
            <person name="Clamp M."/>
            <person name="Cravchik A."/>
            <person name="Curwen V."/>
            <person name="Dana A."/>
            <person name="Delcher A."/>
            <person name="Dew I."/>
            <person name="Evans C.A."/>
            <person name="Flanigan M."/>
            <person name="Grundschober-Freimoser A."/>
            <person name="Friedli L."/>
            <person name="Gu Z."/>
            <person name="Guan P."/>
            <person name="Guigo R."/>
            <person name="Hillenmeyer M.E."/>
            <person name="Hladun S.L."/>
            <person name="Hogan J.R."/>
            <person name="Hong Y.S."/>
            <person name="Hoover J."/>
            <person name="Jaillon O."/>
            <person name="Ke Z."/>
            <person name="Kodira C.D."/>
            <person name="Kokoza E."/>
            <person name="Koutsos A."/>
            <person name="Letunic I."/>
            <person name="Levitsky A.A."/>
            <person name="Liang Y."/>
            <person name="Lin J.-J."/>
            <person name="Lobo N.F."/>
            <person name="Lopez J.R."/>
            <person name="Malek J.A."/>
            <person name="McIntosh T.C."/>
            <person name="Meister S."/>
            <person name="Miller J.R."/>
            <person name="Mobarry C."/>
            <person name="Mongin E."/>
            <person name="Murphy S.D."/>
            <person name="O'Brochta D.A."/>
            <person name="Pfannkoch C."/>
            <person name="Qi R."/>
            <person name="Regier M.A."/>
            <person name="Remington K."/>
            <person name="Shao H."/>
            <person name="Sharakhova M.V."/>
            <person name="Sitter C.D."/>
            <person name="Shetty J."/>
            <person name="Smith T.J."/>
            <person name="Strong R."/>
            <person name="Sun J."/>
            <person name="Thomasova D."/>
            <person name="Ton L.Q."/>
            <person name="Topalis P."/>
            <person name="Tu Z.J."/>
            <person name="Unger M.F."/>
            <person name="Walenz B."/>
            <person name="Wang A.H."/>
            <person name="Wang J."/>
            <person name="Wang M."/>
            <person name="Wang X."/>
            <person name="Woodford K.J."/>
            <person name="Wortman J.R."/>
            <person name="Wu M."/>
            <person name="Yao A."/>
            <person name="Zdobnov E.M."/>
            <person name="Zhang H."/>
            <person name="Zhao Q."/>
            <person name="Zhao S."/>
            <person name="Zhu S.C."/>
            <person name="Zhimulev I."/>
            <person name="Coluzzi M."/>
            <person name="della Torre A."/>
            <person name="Roth C.W."/>
            <person name="Louis C."/>
            <person name="Kalush F."/>
            <person name="Mural R.J."/>
            <person name="Myers E.W."/>
            <person name="Adams M.D."/>
            <person name="Smith H.O."/>
            <person name="Broder S."/>
            <person name="Gardner M.J."/>
            <person name="Fraser C.M."/>
            <person name="Birney E."/>
            <person name="Bork P."/>
            <person name="Brey P.T."/>
            <person name="Venter J.C."/>
            <person name="Weissenbach J."/>
            <person name="Kafatos F.C."/>
            <person name="Collins F.H."/>
            <person name="Hoffman S.L."/>
        </authorList>
    </citation>
    <scope>NUCLEOTIDE SEQUENCE [LARGE SCALE GENOMIC DNA]</scope>
    <source>
        <strain>PEST</strain>
    </source>
</reference>